<name>RL2_CHLTE</name>
<keyword id="KW-1185">Reference proteome</keyword>
<keyword id="KW-0687">Ribonucleoprotein</keyword>
<keyword id="KW-0689">Ribosomal protein</keyword>
<keyword id="KW-0694">RNA-binding</keyword>
<keyword id="KW-0699">rRNA-binding</keyword>
<proteinExistence type="inferred from homology"/>
<organism>
    <name type="scientific">Chlorobaculum tepidum (strain ATCC 49652 / DSM 12025 / NBRC 103806 / TLS)</name>
    <name type="common">Chlorobium tepidum</name>
    <dbReference type="NCBI Taxonomy" id="194439"/>
    <lineage>
        <taxon>Bacteria</taxon>
        <taxon>Pseudomonadati</taxon>
        <taxon>Chlorobiota</taxon>
        <taxon>Chlorobiia</taxon>
        <taxon>Chlorobiales</taxon>
        <taxon>Chlorobiaceae</taxon>
        <taxon>Chlorobaculum</taxon>
    </lineage>
</organism>
<reference key="1">
    <citation type="journal article" date="2002" name="Proc. Natl. Acad. Sci. U.S.A.">
        <title>The complete genome sequence of Chlorobium tepidum TLS, a photosynthetic, anaerobic, green-sulfur bacterium.</title>
        <authorList>
            <person name="Eisen J.A."/>
            <person name="Nelson K.E."/>
            <person name="Paulsen I.T."/>
            <person name="Heidelberg J.F."/>
            <person name="Wu M."/>
            <person name="Dodson R.J."/>
            <person name="DeBoy R.T."/>
            <person name="Gwinn M.L."/>
            <person name="Nelson W.C."/>
            <person name="Haft D.H."/>
            <person name="Hickey E.K."/>
            <person name="Peterson J.D."/>
            <person name="Durkin A.S."/>
            <person name="Kolonay J.F."/>
            <person name="Yang F."/>
            <person name="Holt I.E."/>
            <person name="Umayam L.A."/>
            <person name="Mason T.M."/>
            <person name="Brenner M."/>
            <person name="Shea T.P."/>
            <person name="Parksey D.S."/>
            <person name="Nierman W.C."/>
            <person name="Feldblyum T.V."/>
            <person name="Hansen C.L."/>
            <person name="Craven M.B."/>
            <person name="Radune D."/>
            <person name="Vamathevan J.J."/>
            <person name="Khouri H.M."/>
            <person name="White O."/>
            <person name="Gruber T.M."/>
            <person name="Ketchum K.A."/>
            <person name="Venter J.C."/>
            <person name="Tettelin H."/>
            <person name="Bryant D.A."/>
            <person name="Fraser C.M."/>
        </authorList>
    </citation>
    <scope>NUCLEOTIDE SEQUENCE [LARGE SCALE GENOMIC DNA]</scope>
    <source>
        <strain>ATCC 49652 / DSM 12025 / NBRC 103806 / TLS</strain>
    </source>
</reference>
<gene>
    <name evidence="1" type="primary">rplB</name>
    <name type="ordered locus">CT2186</name>
</gene>
<protein>
    <recommendedName>
        <fullName evidence="1">Large ribosomal subunit protein uL2</fullName>
    </recommendedName>
    <alternativeName>
        <fullName evidence="3">50S ribosomal protein L2</fullName>
    </alternativeName>
</protein>
<evidence type="ECO:0000255" key="1">
    <source>
        <dbReference type="HAMAP-Rule" id="MF_01320"/>
    </source>
</evidence>
<evidence type="ECO:0000256" key="2">
    <source>
        <dbReference type="SAM" id="MobiDB-lite"/>
    </source>
</evidence>
<evidence type="ECO:0000305" key="3"/>
<comment type="function">
    <text evidence="1">One of the primary rRNA binding proteins. Required for association of the 30S and 50S subunits to form the 70S ribosome, for tRNA binding and peptide bond formation. It has been suggested to have peptidyltransferase activity; this is somewhat controversial. Makes several contacts with the 16S rRNA in the 70S ribosome.</text>
</comment>
<comment type="subunit">
    <text evidence="1">Part of the 50S ribosomal subunit. Forms a bridge to the 30S subunit in the 70S ribosome.</text>
</comment>
<comment type="similarity">
    <text evidence="1">Belongs to the universal ribosomal protein uL2 family.</text>
</comment>
<feature type="chain" id="PRO_0000129548" description="Large ribosomal subunit protein uL2">
    <location>
        <begin position="1"/>
        <end position="279"/>
    </location>
</feature>
<feature type="region of interest" description="Disordered" evidence="2">
    <location>
        <begin position="223"/>
        <end position="279"/>
    </location>
</feature>
<feature type="compositionally biased region" description="Gly residues" evidence="2">
    <location>
        <begin position="232"/>
        <end position="242"/>
    </location>
</feature>
<feature type="compositionally biased region" description="Basic residues" evidence="2">
    <location>
        <begin position="259"/>
        <end position="279"/>
    </location>
</feature>
<dbReference type="EMBL" id="AE006470">
    <property type="protein sequence ID" value="AAM73402.1"/>
    <property type="molecule type" value="Genomic_DNA"/>
</dbReference>
<dbReference type="RefSeq" id="NP_663060.1">
    <property type="nucleotide sequence ID" value="NC_002932.3"/>
</dbReference>
<dbReference type="RefSeq" id="WP_010933839.1">
    <property type="nucleotide sequence ID" value="NC_002932.3"/>
</dbReference>
<dbReference type="SMR" id="Q8KAH5"/>
<dbReference type="STRING" id="194439.CT2186"/>
<dbReference type="EnsemblBacteria" id="AAM73402">
    <property type="protein sequence ID" value="AAM73402"/>
    <property type="gene ID" value="CT2186"/>
</dbReference>
<dbReference type="KEGG" id="cte:CT2186"/>
<dbReference type="PATRIC" id="fig|194439.7.peg.1985"/>
<dbReference type="eggNOG" id="COG0090">
    <property type="taxonomic scope" value="Bacteria"/>
</dbReference>
<dbReference type="HOGENOM" id="CLU_036235_2_1_10"/>
<dbReference type="OrthoDB" id="9778722at2"/>
<dbReference type="Proteomes" id="UP000001007">
    <property type="component" value="Chromosome"/>
</dbReference>
<dbReference type="GO" id="GO:0015934">
    <property type="term" value="C:large ribosomal subunit"/>
    <property type="evidence" value="ECO:0007669"/>
    <property type="project" value="InterPro"/>
</dbReference>
<dbReference type="GO" id="GO:0019843">
    <property type="term" value="F:rRNA binding"/>
    <property type="evidence" value="ECO:0007669"/>
    <property type="project" value="UniProtKB-UniRule"/>
</dbReference>
<dbReference type="GO" id="GO:0003735">
    <property type="term" value="F:structural constituent of ribosome"/>
    <property type="evidence" value="ECO:0007669"/>
    <property type="project" value="InterPro"/>
</dbReference>
<dbReference type="GO" id="GO:0016740">
    <property type="term" value="F:transferase activity"/>
    <property type="evidence" value="ECO:0007669"/>
    <property type="project" value="InterPro"/>
</dbReference>
<dbReference type="GO" id="GO:0002181">
    <property type="term" value="P:cytoplasmic translation"/>
    <property type="evidence" value="ECO:0007669"/>
    <property type="project" value="TreeGrafter"/>
</dbReference>
<dbReference type="FunFam" id="2.30.30.30:FF:000001">
    <property type="entry name" value="50S ribosomal protein L2"/>
    <property type="match status" value="1"/>
</dbReference>
<dbReference type="FunFam" id="2.40.50.140:FF:000003">
    <property type="entry name" value="50S ribosomal protein L2"/>
    <property type="match status" value="1"/>
</dbReference>
<dbReference type="FunFam" id="4.10.950.10:FF:000001">
    <property type="entry name" value="50S ribosomal protein L2"/>
    <property type="match status" value="1"/>
</dbReference>
<dbReference type="Gene3D" id="2.30.30.30">
    <property type="match status" value="1"/>
</dbReference>
<dbReference type="Gene3D" id="2.40.50.140">
    <property type="entry name" value="Nucleic acid-binding proteins"/>
    <property type="match status" value="1"/>
</dbReference>
<dbReference type="Gene3D" id="4.10.950.10">
    <property type="entry name" value="Ribosomal protein L2, domain 3"/>
    <property type="match status" value="1"/>
</dbReference>
<dbReference type="HAMAP" id="MF_01320_B">
    <property type="entry name" value="Ribosomal_uL2_B"/>
    <property type="match status" value="1"/>
</dbReference>
<dbReference type="InterPro" id="IPR012340">
    <property type="entry name" value="NA-bd_OB-fold"/>
</dbReference>
<dbReference type="InterPro" id="IPR014722">
    <property type="entry name" value="Rib_uL2_dom2"/>
</dbReference>
<dbReference type="InterPro" id="IPR002171">
    <property type="entry name" value="Ribosomal_uL2"/>
</dbReference>
<dbReference type="InterPro" id="IPR005880">
    <property type="entry name" value="Ribosomal_uL2_bac/org-type"/>
</dbReference>
<dbReference type="InterPro" id="IPR022669">
    <property type="entry name" value="Ribosomal_uL2_C"/>
</dbReference>
<dbReference type="InterPro" id="IPR014726">
    <property type="entry name" value="Ribosomal_uL2_dom3"/>
</dbReference>
<dbReference type="InterPro" id="IPR022666">
    <property type="entry name" value="Ribosomal_uL2_RNA-bd_dom"/>
</dbReference>
<dbReference type="InterPro" id="IPR008991">
    <property type="entry name" value="Translation_prot_SH3-like_sf"/>
</dbReference>
<dbReference type="NCBIfam" id="TIGR01171">
    <property type="entry name" value="rplB_bact"/>
    <property type="match status" value="1"/>
</dbReference>
<dbReference type="PANTHER" id="PTHR13691:SF5">
    <property type="entry name" value="LARGE RIBOSOMAL SUBUNIT PROTEIN UL2M"/>
    <property type="match status" value="1"/>
</dbReference>
<dbReference type="PANTHER" id="PTHR13691">
    <property type="entry name" value="RIBOSOMAL PROTEIN L2"/>
    <property type="match status" value="1"/>
</dbReference>
<dbReference type="Pfam" id="PF00181">
    <property type="entry name" value="Ribosomal_L2"/>
    <property type="match status" value="1"/>
</dbReference>
<dbReference type="Pfam" id="PF03947">
    <property type="entry name" value="Ribosomal_L2_C"/>
    <property type="match status" value="1"/>
</dbReference>
<dbReference type="PIRSF" id="PIRSF002158">
    <property type="entry name" value="Ribosomal_L2"/>
    <property type="match status" value="1"/>
</dbReference>
<dbReference type="SMART" id="SM01383">
    <property type="entry name" value="Ribosomal_L2"/>
    <property type="match status" value="1"/>
</dbReference>
<dbReference type="SMART" id="SM01382">
    <property type="entry name" value="Ribosomal_L2_C"/>
    <property type="match status" value="1"/>
</dbReference>
<dbReference type="SUPFAM" id="SSF50249">
    <property type="entry name" value="Nucleic acid-binding proteins"/>
    <property type="match status" value="1"/>
</dbReference>
<dbReference type="SUPFAM" id="SSF50104">
    <property type="entry name" value="Translation proteins SH3-like domain"/>
    <property type="match status" value="1"/>
</dbReference>
<sequence>MAIRKLAPVTPGTRFASYAGFDEITKSTPEKSLLVPIKRTGGRNSTGRVTSRHMGGGHKRFYRIIDFKRNKDNVPAKVAAIEYDPNRSARIALLHYVDGEKRYILAPKNLKVGDRIESGEKVDIKVGNTMPLKNIPIGSDVHNIELKIGKGGQIARSAGAYAVLAAREGNYATLKMPSGEIRKVRIECRATIGVIGNAEHENISLGKAGRSRWLGIRPQTRGMAMNPVDHPMGGGEGKSKSGGGRKHPKSPWGQLAKGLKTRNKKKASTKLIVRGRKAK</sequence>
<accession>Q8KAH5</accession>